<sequence length="322" mass="35850">MKTTFLDFEQPIAELEAKIEELRFVQDDSALDISEEIRRLQKKSQALTKDIYAKLNAWQVSQVARHPQRPYTLDYIQGLFTDFVELHGDRAYADDAAIVGGMARFNGEPVMVIGHQKGRDTKEKIFRNFGMPRPEGYRKALRLMRLAEKFRLPILTFIDTPGAYPGIGAEERGQSEAIARNLYVMAELQTPIVCTIVGEGGSGGALAIGVGDRTLILQYSTYSVISPEGCASILWKSADKASVAAETLGITADRLKANGLVDRIIEEPLGGAQRDWDAMFQSMRRALTDTLAELRKQPTEAMLGARYQRLRAYGSFKEAPAR</sequence>
<dbReference type="EC" id="2.1.3.15" evidence="1"/>
<dbReference type="EMBL" id="CP000116">
    <property type="protein sequence ID" value="AAZ96541.1"/>
    <property type="molecule type" value="Genomic_DNA"/>
</dbReference>
<dbReference type="RefSeq" id="WP_011311100.1">
    <property type="nucleotide sequence ID" value="NC_007404.1"/>
</dbReference>
<dbReference type="SMR" id="Q3SL76"/>
<dbReference type="STRING" id="292415.Tbd_0588"/>
<dbReference type="KEGG" id="tbd:Tbd_0588"/>
<dbReference type="eggNOG" id="COG0825">
    <property type="taxonomic scope" value="Bacteria"/>
</dbReference>
<dbReference type="HOGENOM" id="CLU_015486_0_2_4"/>
<dbReference type="OrthoDB" id="9808023at2"/>
<dbReference type="UniPathway" id="UPA00655">
    <property type="reaction ID" value="UER00711"/>
</dbReference>
<dbReference type="Proteomes" id="UP000008291">
    <property type="component" value="Chromosome"/>
</dbReference>
<dbReference type="GO" id="GO:0009317">
    <property type="term" value="C:acetyl-CoA carboxylase complex"/>
    <property type="evidence" value="ECO:0007669"/>
    <property type="project" value="InterPro"/>
</dbReference>
<dbReference type="GO" id="GO:0003989">
    <property type="term" value="F:acetyl-CoA carboxylase activity"/>
    <property type="evidence" value="ECO:0007669"/>
    <property type="project" value="InterPro"/>
</dbReference>
<dbReference type="GO" id="GO:0005524">
    <property type="term" value="F:ATP binding"/>
    <property type="evidence" value="ECO:0007669"/>
    <property type="project" value="UniProtKB-KW"/>
</dbReference>
<dbReference type="GO" id="GO:0016743">
    <property type="term" value="F:carboxyl- or carbamoyltransferase activity"/>
    <property type="evidence" value="ECO:0007669"/>
    <property type="project" value="UniProtKB-UniRule"/>
</dbReference>
<dbReference type="GO" id="GO:0006633">
    <property type="term" value="P:fatty acid biosynthetic process"/>
    <property type="evidence" value="ECO:0007669"/>
    <property type="project" value="UniProtKB-KW"/>
</dbReference>
<dbReference type="GO" id="GO:2001295">
    <property type="term" value="P:malonyl-CoA biosynthetic process"/>
    <property type="evidence" value="ECO:0007669"/>
    <property type="project" value="UniProtKB-UniRule"/>
</dbReference>
<dbReference type="Gene3D" id="3.90.226.10">
    <property type="entry name" value="2-enoyl-CoA Hydratase, Chain A, domain 1"/>
    <property type="match status" value="1"/>
</dbReference>
<dbReference type="HAMAP" id="MF_00823">
    <property type="entry name" value="AcetylCoA_CT_alpha"/>
    <property type="match status" value="1"/>
</dbReference>
<dbReference type="InterPro" id="IPR001095">
    <property type="entry name" value="Acetyl_CoA_COase_a_su"/>
</dbReference>
<dbReference type="InterPro" id="IPR029045">
    <property type="entry name" value="ClpP/crotonase-like_dom_sf"/>
</dbReference>
<dbReference type="InterPro" id="IPR011763">
    <property type="entry name" value="COA_CT_C"/>
</dbReference>
<dbReference type="NCBIfam" id="TIGR00513">
    <property type="entry name" value="accA"/>
    <property type="match status" value="1"/>
</dbReference>
<dbReference type="NCBIfam" id="NF041504">
    <property type="entry name" value="AccA_sub"/>
    <property type="match status" value="1"/>
</dbReference>
<dbReference type="NCBIfam" id="NF004344">
    <property type="entry name" value="PRK05724.1"/>
    <property type="match status" value="1"/>
</dbReference>
<dbReference type="PANTHER" id="PTHR42853">
    <property type="entry name" value="ACETYL-COENZYME A CARBOXYLASE CARBOXYL TRANSFERASE SUBUNIT ALPHA"/>
    <property type="match status" value="1"/>
</dbReference>
<dbReference type="PANTHER" id="PTHR42853:SF3">
    <property type="entry name" value="ACETYL-COENZYME A CARBOXYLASE CARBOXYL TRANSFERASE SUBUNIT ALPHA, CHLOROPLASTIC"/>
    <property type="match status" value="1"/>
</dbReference>
<dbReference type="Pfam" id="PF03255">
    <property type="entry name" value="ACCA"/>
    <property type="match status" value="1"/>
</dbReference>
<dbReference type="PRINTS" id="PR01069">
    <property type="entry name" value="ACCCTRFRASEA"/>
</dbReference>
<dbReference type="SUPFAM" id="SSF52096">
    <property type="entry name" value="ClpP/crotonase"/>
    <property type="match status" value="1"/>
</dbReference>
<dbReference type="PROSITE" id="PS50989">
    <property type="entry name" value="COA_CT_CTER"/>
    <property type="match status" value="1"/>
</dbReference>
<feature type="chain" id="PRO_0000223845" description="Acetyl-coenzyme A carboxylase carboxyl transferase subunit alpha">
    <location>
        <begin position="1"/>
        <end position="322"/>
    </location>
</feature>
<feature type="domain" description="CoA carboxyltransferase C-terminal" evidence="2">
    <location>
        <begin position="39"/>
        <end position="293"/>
    </location>
</feature>
<accession>Q3SL76</accession>
<reference key="1">
    <citation type="journal article" date="2006" name="J. Bacteriol.">
        <title>The genome sequence of the obligately chemolithoautotrophic, facultatively anaerobic bacterium Thiobacillus denitrificans.</title>
        <authorList>
            <person name="Beller H.R."/>
            <person name="Chain P.S."/>
            <person name="Letain T.E."/>
            <person name="Chakicherla A."/>
            <person name="Larimer F.W."/>
            <person name="Richardson P.M."/>
            <person name="Coleman M.A."/>
            <person name="Wood A.P."/>
            <person name="Kelly D.P."/>
        </authorList>
    </citation>
    <scope>NUCLEOTIDE SEQUENCE [LARGE SCALE GENOMIC DNA]</scope>
    <source>
        <strain>ATCC 25259 / T1</strain>
    </source>
</reference>
<proteinExistence type="inferred from homology"/>
<organism>
    <name type="scientific">Thiobacillus denitrificans (strain ATCC 25259 / T1)</name>
    <dbReference type="NCBI Taxonomy" id="292415"/>
    <lineage>
        <taxon>Bacteria</taxon>
        <taxon>Pseudomonadati</taxon>
        <taxon>Pseudomonadota</taxon>
        <taxon>Betaproteobacteria</taxon>
        <taxon>Nitrosomonadales</taxon>
        <taxon>Thiobacillaceae</taxon>
        <taxon>Thiobacillus</taxon>
    </lineage>
</organism>
<gene>
    <name evidence="1" type="primary">accA</name>
    <name type="ordered locus">Tbd_0588</name>
</gene>
<evidence type="ECO:0000255" key="1">
    <source>
        <dbReference type="HAMAP-Rule" id="MF_00823"/>
    </source>
</evidence>
<evidence type="ECO:0000255" key="2">
    <source>
        <dbReference type="PROSITE-ProRule" id="PRU01137"/>
    </source>
</evidence>
<name>ACCA_THIDA</name>
<protein>
    <recommendedName>
        <fullName evidence="1">Acetyl-coenzyme A carboxylase carboxyl transferase subunit alpha</fullName>
        <shortName evidence="1">ACCase subunit alpha</shortName>
        <shortName evidence="1">Acetyl-CoA carboxylase carboxyltransferase subunit alpha</shortName>
        <ecNumber evidence="1">2.1.3.15</ecNumber>
    </recommendedName>
</protein>
<keyword id="KW-0067">ATP-binding</keyword>
<keyword id="KW-0963">Cytoplasm</keyword>
<keyword id="KW-0275">Fatty acid biosynthesis</keyword>
<keyword id="KW-0276">Fatty acid metabolism</keyword>
<keyword id="KW-0444">Lipid biosynthesis</keyword>
<keyword id="KW-0443">Lipid metabolism</keyword>
<keyword id="KW-0547">Nucleotide-binding</keyword>
<keyword id="KW-1185">Reference proteome</keyword>
<keyword id="KW-0808">Transferase</keyword>
<comment type="function">
    <text evidence="1">Component of the acetyl coenzyme A carboxylase (ACC) complex. First, biotin carboxylase catalyzes the carboxylation of biotin on its carrier protein (BCCP) and then the CO(2) group is transferred by the carboxyltransferase to acetyl-CoA to form malonyl-CoA.</text>
</comment>
<comment type="catalytic activity">
    <reaction evidence="1">
        <text>N(6)-carboxybiotinyl-L-lysyl-[protein] + acetyl-CoA = N(6)-biotinyl-L-lysyl-[protein] + malonyl-CoA</text>
        <dbReference type="Rhea" id="RHEA:54728"/>
        <dbReference type="Rhea" id="RHEA-COMP:10505"/>
        <dbReference type="Rhea" id="RHEA-COMP:10506"/>
        <dbReference type="ChEBI" id="CHEBI:57288"/>
        <dbReference type="ChEBI" id="CHEBI:57384"/>
        <dbReference type="ChEBI" id="CHEBI:83144"/>
        <dbReference type="ChEBI" id="CHEBI:83145"/>
        <dbReference type="EC" id="2.1.3.15"/>
    </reaction>
</comment>
<comment type="pathway">
    <text evidence="1">Lipid metabolism; malonyl-CoA biosynthesis; malonyl-CoA from acetyl-CoA: step 1/1.</text>
</comment>
<comment type="subunit">
    <text evidence="1">Acetyl-CoA carboxylase is a heterohexamer composed of biotin carboxyl carrier protein (AccB), biotin carboxylase (AccC) and two subunits each of ACCase subunit alpha (AccA) and ACCase subunit beta (AccD).</text>
</comment>
<comment type="subcellular location">
    <subcellularLocation>
        <location evidence="1">Cytoplasm</location>
    </subcellularLocation>
</comment>
<comment type="similarity">
    <text evidence="1">Belongs to the AccA family.</text>
</comment>